<gene>
    <name type="primary">PAH1</name>
    <name type="synonym">PAP1</name>
    <name type="synonym">SMP2</name>
    <name type="ordered locus">YMR165C</name>
    <name type="ORF">YM8520.14C</name>
</gene>
<sequence>MQYVGRALGSVSKTWSSINPATLSGAIDVIVVEHPDGRLSCSPFHVRFGKFQILKPSQKKVQVFINEKLSNMPMKLSDSGEAYFVFEMGDQVTDVPDELLVSPVMSATSSPPQSPETSILEGGTEGEGEGENENKKKEKKVLEEPDFLDINDTGDSGSKNSETTGSLSPTESSTTTPPDSVEERKLVEQRTKNFQQKLNKKLTEIHIPSKLDNNGDLLLDTEGYKPNKNMMHDTDIQLKQLLKDEFGNDSDISSFIKEDKNGNIKIVNPYEHLTDLSPPGTPPTMATSGSVLGLDAMESGSTLNSLSSSPSGSDTEDETSFSKEQSSKSEKTSKKGTAGSGETEKRYIRTIRLTNDQLKCLNLTYGENDLKFSVDHGKAIVTSKLFVWRWDVPIVISDIDGTITKSDALGHVLAMIGKDWTHLGVAKLFSEISRNGYNILYLTARSAGQADSTRSYLRSIEQNGSKLPNGPVILSPDRTMAALRREVILKKPEVFKIACLNDIRSLYFEDSDNEVDTEEKSTPFFAGFGNRITDALSYRTVGIPSSRIFTINTEGEVHMELLELAGYRSSYIHINELVDHFFPPVSLDSVDLRTNTSMVPGSPPNRTLDNFDSEITSGRKTLFRGNQEEKFTDVNFWRDPLVDIDNLSDISNDDSDNIDEDTDVSQQSNISRNRANSVKTAKVTKAPQRNVSGSTNNNEVLAASSDVENASDLVSSHSSSGSTPNKSTMSKGDIGKQIYLELGSPLASPKLRYLDDMDDEDSNYNRTKSRRASSAAATSIDKEFKKLSVSKAGAPTRIVSKINVSNDVHSLGNSDTESRREQSVNETGRNQLPHNSMDDKDLDSRVSDEFDDDEFDEDEFED</sequence>
<proteinExistence type="evidence at protein level"/>
<dbReference type="EC" id="3.1.3.4" evidence="4 6 7 11 12"/>
<dbReference type="EMBL" id="D01095">
    <property type="protein sequence ID" value="BAA00880.1"/>
    <property type="molecule type" value="Genomic_DNA"/>
</dbReference>
<dbReference type="EMBL" id="Z49705">
    <property type="protein sequence ID" value="CAA89801.1"/>
    <property type="molecule type" value="Genomic_DNA"/>
</dbReference>
<dbReference type="EMBL" id="BK006946">
    <property type="protein sequence ID" value="DAA10061.1"/>
    <property type="molecule type" value="Genomic_DNA"/>
</dbReference>
<dbReference type="PIR" id="S30911">
    <property type="entry name" value="S30911"/>
</dbReference>
<dbReference type="RefSeq" id="NP_013888.1">
    <property type="nucleotide sequence ID" value="NM_001182669.1"/>
</dbReference>
<dbReference type="SMR" id="P32567"/>
<dbReference type="BioGRID" id="35343">
    <property type="interactions" value="235"/>
</dbReference>
<dbReference type="DIP" id="DIP-1454N"/>
<dbReference type="FunCoup" id="P32567">
    <property type="interactions" value="551"/>
</dbReference>
<dbReference type="IntAct" id="P32567">
    <property type="interactions" value="12"/>
</dbReference>
<dbReference type="MINT" id="P32567"/>
<dbReference type="STRING" id="4932.YMR165C"/>
<dbReference type="SwissLipids" id="SLP:000000045"/>
<dbReference type="GlyGen" id="P32567">
    <property type="glycosylation" value="1 site"/>
</dbReference>
<dbReference type="iPTMnet" id="P32567"/>
<dbReference type="PaxDb" id="4932-YMR165C"/>
<dbReference type="PeptideAtlas" id="P32567"/>
<dbReference type="EnsemblFungi" id="YMR165C_mRNA">
    <property type="protein sequence ID" value="YMR165C"/>
    <property type="gene ID" value="YMR165C"/>
</dbReference>
<dbReference type="GeneID" id="855201"/>
<dbReference type="KEGG" id="sce:YMR165C"/>
<dbReference type="AGR" id="SGD:S000004775"/>
<dbReference type="SGD" id="S000004775">
    <property type="gene designation" value="PAH1"/>
</dbReference>
<dbReference type="VEuPathDB" id="FungiDB:YMR165C"/>
<dbReference type="eggNOG" id="KOG2116">
    <property type="taxonomic scope" value="Eukaryota"/>
</dbReference>
<dbReference type="GeneTree" id="ENSGT00940000168260"/>
<dbReference type="HOGENOM" id="CLU_002546_3_1_1"/>
<dbReference type="InParanoid" id="P32567"/>
<dbReference type="OMA" id="QDYSMKL"/>
<dbReference type="OrthoDB" id="4567at2759"/>
<dbReference type="BioCyc" id="MetaCyc:G3O-32855-MONOMER"/>
<dbReference type="BioCyc" id="YEAST:G3O-32855-MONOMER"/>
<dbReference type="BRENDA" id="3.1.3.4">
    <property type="organism ID" value="984"/>
</dbReference>
<dbReference type="Reactome" id="R-SCE-1483191">
    <property type="pathway name" value="Synthesis of PC"/>
</dbReference>
<dbReference type="Reactome" id="R-SCE-1483213">
    <property type="pathway name" value="Synthesis of PE"/>
</dbReference>
<dbReference type="Reactome" id="R-SCE-4419969">
    <property type="pathway name" value="Depolymerization of the Nuclear Lamina"/>
</dbReference>
<dbReference type="Reactome" id="R-SCE-75109">
    <property type="pathway name" value="Triglyceride biosynthesis"/>
</dbReference>
<dbReference type="BioGRID-ORCS" id="855201">
    <property type="hits" value="7 hits in 10 CRISPR screens"/>
</dbReference>
<dbReference type="PRO" id="PR:P32567"/>
<dbReference type="Proteomes" id="UP000002311">
    <property type="component" value="Chromosome XIII"/>
</dbReference>
<dbReference type="RNAct" id="P32567">
    <property type="molecule type" value="protein"/>
</dbReference>
<dbReference type="GO" id="GO:0005737">
    <property type="term" value="C:cytoplasm"/>
    <property type="evidence" value="ECO:0007005"/>
    <property type="project" value="SGD"/>
</dbReference>
<dbReference type="GO" id="GO:0005829">
    <property type="term" value="C:cytosol"/>
    <property type="evidence" value="ECO:0000314"/>
    <property type="project" value="SGD"/>
</dbReference>
<dbReference type="GO" id="GO:0005789">
    <property type="term" value="C:endoplasmic reticulum membrane"/>
    <property type="evidence" value="ECO:0007669"/>
    <property type="project" value="UniProtKB-SubCell"/>
</dbReference>
<dbReference type="GO" id="GO:0005811">
    <property type="term" value="C:lipid droplet"/>
    <property type="evidence" value="ECO:0000314"/>
    <property type="project" value="SGD"/>
</dbReference>
<dbReference type="GO" id="GO:0031965">
    <property type="term" value="C:nuclear membrane"/>
    <property type="evidence" value="ECO:0000314"/>
    <property type="project" value="SGD"/>
</dbReference>
<dbReference type="GO" id="GO:0005634">
    <property type="term" value="C:nucleus"/>
    <property type="evidence" value="ECO:0000318"/>
    <property type="project" value="GO_Central"/>
</dbReference>
<dbReference type="GO" id="GO:0005773">
    <property type="term" value="C:vacuole"/>
    <property type="evidence" value="ECO:0000314"/>
    <property type="project" value="SGD"/>
</dbReference>
<dbReference type="GO" id="GO:0008195">
    <property type="term" value="F:phosphatidate phosphatase activity"/>
    <property type="evidence" value="ECO:0000314"/>
    <property type="project" value="UniProtKB"/>
</dbReference>
<dbReference type="GO" id="GO:0000976">
    <property type="term" value="F:transcription cis-regulatory region binding"/>
    <property type="evidence" value="ECO:0000314"/>
    <property type="project" value="SGD"/>
</dbReference>
<dbReference type="GO" id="GO:0009060">
    <property type="term" value="P:aerobic respiration"/>
    <property type="evidence" value="ECO:0000315"/>
    <property type="project" value="SGD"/>
</dbReference>
<dbReference type="GO" id="GO:0006651">
    <property type="term" value="P:diacylglycerol biosynthetic process"/>
    <property type="evidence" value="ECO:0000314"/>
    <property type="project" value="SGD"/>
</dbReference>
<dbReference type="GO" id="GO:0009062">
    <property type="term" value="P:fatty acid catabolic process"/>
    <property type="evidence" value="ECO:0000318"/>
    <property type="project" value="GO_Central"/>
</dbReference>
<dbReference type="GO" id="GO:0034389">
    <property type="term" value="P:lipid droplet organization"/>
    <property type="evidence" value="ECO:0000315"/>
    <property type="project" value="SGD"/>
</dbReference>
<dbReference type="GO" id="GO:0008654">
    <property type="term" value="P:phospholipid biosynthetic process"/>
    <property type="evidence" value="ECO:0000315"/>
    <property type="project" value="SGD"/>
</dbReference>
<dbReference type="GO" id="GO:0006276">
    <property type="term" value="P:plasmid maintenance"/>
    <property type="evidence" value="ECO:0000315"/>
    <property type="project" value="SGD"/>
</dbReference>
<dbReference type="GO" id="GO:0019432">
    <property type="term" value="P:triglyceride biosynthetic process"/>
    <property type="evidence" value="ECO:0000314"/>
    <property type="project" value="UniProtKB"/>
</dbReference>
<dbReference type="GO" id="GO:0042144">
    <property type="term" value="P:vacuole fusion, non-autophagic"/>
    <property type="evidence" value="ECO:0000315"/>
    <property type="project" value="SGD"/>
</dbReference>
<dbReference type="FunFam" id="3.40.50.1000:FF:000063">
    <property type="entry name" value="Nuclear elongation and deformation protein"/>
    <property type="match status" value="1"/>
</dbReference>
<dbReference type="Gene3D" id="3.40.50.1000">
    <property type="entry name" value="HAD superfamily/HAD-like"/>
    <property type="match status" value="1"/>
</dbReference>
<dbReference type="InterPro" id="IPR036412">
    <property type="entry name" value="HAD-like_sf"/>
</dbReference>
<dbReference type="InterPro" id="IPR023214">
    <property type="entry name" value="HAD_sf"/>
</dbReference>
<dbReference type="InterPro" id="IPR026058">
    <property type="entry name" value="LIPIN"/>
</dbReference>
<dbReference type="InterPro" id="IPR007651">
    <property type="entry name" value="Lipin_N"/>
</dbReference>
<dbReference type="InterPro" id="IPR013209">
    <property type="entry name" value="LNS2"/>
</dbReference>
<dbReference type="InterPro" id="IPR031315">
    <property type="entry name" value="LNS2/PITP"/>
</dbReference>
<dbReference type="PANTHER" id="PTHR12181">
    <property type="entry name" value="LIPIN"/>
    <property type="match status" value="1"/>
</dbReference>
<dbReference type="PANTHER" id="PTHR12181:SF12">
    <property type="entry name" value="PHOSPHATIDATE PHOSPHATASE"/>
    <property type="match status" value="1"/>
</dbReference>
<dbReference type="Pfam" id="PF04571">
    <property type="entry name" value="Lipin_N"/>
    <property type="match status" value="1"/>
</dbReference>
<dbReference type="Pfam" id="PF08235">
    <property type="entry name" value="LNS2"/>
    <property type="match status" value="1"/>
</dbReference>
<dbReference type="Pfam" id="PF24565">
    <property type="entry name" value="Ned1_M"/>
    <property type="match status" value="1"/>
</dbReference>
<dbReference type="SMART" id="SM00775">
    <property type="entry name" value="LNS2"/>
    <property type="match status" value="1"/>
</dbReference>
<dbReference type="SUPFAM" id="SSF56784">
    <property type="entry name" value="HAD-like"/>
    <property type="match status" value="1"/>
</dbReference>
<name>PAH1_YEAST</name>
<accession>P32567</accession>
<accession>D6VZY7</accession>
<feature type="chain" id="PRO_0000209887" description="Phosphatidic acid phosphohydrolase 1">
    <location>
        <begin position="1"/>
        <end position="862"/>
    </location>
</feature>
<feature type="region of interest" description="N-LIP">
    <location>
        <begin position="19"/>
        <end position="104"/>
    </location>
</feature>
<feature type="region of interest" description="Disordered" evidence="1">
    <location>
        <begin position="104"/>
        <end position="183"/>
    </location>
</feature>
<feature type="region of interest" description="Disordered" evidence="1">
    <location>
        <begin position="300"/>
        <end position="341"/>
    </location>
</feature>
<feature type="region of interest" description="Disordered" evidence="1">
    <location>
        <begin position="648"/>
        <end position="732"/>
    </location>
</feature>
<feature type="region of interest" description="Disordered" evidence="1">
    <location>
        <begin position="757"/>
        <end position="780"/>
    </location>
</feature>
<feature type="region of interest" description="Disordered" evidence="1">
    <location>
        <begin position="807"/>
        <end position="862"/>
    </location>
</feature>
<feature type="short sequence motif" description="DXDXT motif">
    <location>
        <begin position="398"/>
        <end position="402"/>
    </location>
</feature>
<feature type="compositionally biased region" description="Polar residues" evidence="1">
    <location>
        <begin position="105"/>
        <end position="117"/>
    </location>
</feature>
<feature type="compositionally biased region" description="Basic and acidic residues" evidence="1">
    <location>
        <begin position="132"/>
        <end position="143"/>
    </location>
</feature>
<feature type="compositionally biased region" description="Low complexity" evidence="1">
    <location>
        <begin position="161"/>
        <end position="179"/>
    </location>
</feature>
<feature type="compositionally biased region" description="Low complexity" evidence="1">
    <location>
        <begin position="300"/>
        <end position="313"/>
    </location>
</feature>
<feature type="compositionally biased region" description="Acidic residues" evidence="1">
    <location>
        <begin position="651"/>
        <end position="663"/>
    </location>
</feature>
<feature type="compositionally biased region" description="Polar residues" evidence="1">
    <location>
        <begin position="664"/>
        <end position="679"/>
    </location>
</feature>
<feature type="compositionally biased region" description="Polar residues" evidence="1">
    <location>
        <begin position="687"/>
        <end position="699"/>
    </location>
</feature>
<feature type="compositionally biased region" description="Low complexity" evidence="1">
    <location>
        <begin position="710"/>
        <end position="730"/>
    </location>
</feature>
<feature type="compositionally biased region" description="Polar residues" evidence="1">
    <location>
        <begin position="824"/>
        <end position="834"/>
    </location>
</feature>
<feature type="compositionally biased region" description="Basic and acidic residues" evidence="1">
    <location>
        <begin position="836"/>
        <end position="848"/>
    </location>
</feature>
<feature type="compositionally biased region" description="Acidic residues" evidence="1">
    <location>
        <begin position="849"/>
        <end position="862"/>
    </location>
</feature>
<feature type="modified residue" description="Phosphoserine" evidence="5">
    <location>
        <position position="110"/>
    </location>
</feature>
<feature type="modified residue" description="Phosphoserine" evidence="5">
    <location>
        <position position="114"/>
    </location>
</feature>
<feature type="modified residue" description="Phosphoserine" evidence="5">
    <location>
        <position position="168"/>
    </location>
</feature>
<feature type="modified residue" description="N6-acetyllysine" evidence="11">
    <location>
        <position position="496"/>
    </location>
</feature>
<feature type="modified residue" description="Phosphoserine" evidence="17">
    <location>
        <position position="511"/>
    </location>
</feature>
<feature type="modified residue" description="Phosphoserine; by CDC28" evidence="5 9 15 16 17">
    <location>
        <position position="602"/>
    </location>
</feature>
<feature type="modified residue" description="Phosphothreonine; by CDC28" evidence="5 9">
    <location>
        <position position="723"/>
    </location>
</feature>
<feature type="modified residue" description="Phosphoserine; by CDC28" evidence="5 9 15 16 17">
    <location>
        <position position="744"/>
    </location>
</feature>
<feature type="modified residue" description="Phosphoserine" evidence="5 15 16 17">
    <location>
        <position position="748"/>
    </location>
</feature>
<feature type="modified residue" description="Phosphoserine" evidence="17">
    <location>
        <position position="773"/>
    </location>
</feature>
<feature type="modified residue" description="Phosphoserine" evidence="17">
    <location>
        <position position="774"/>
    </location>
</feature>
<feature type="modified residue" description="N6-acetyllysine" evidence="11">
    <location>
        <position position="801"/>
    </location>
</feature>
<feature type="modified residue" description="Phosphoserine" evidence="17">
    <location>
        <position position="810"/>
    </location>
</feature>
<feature type="modified residue" description="Phosphoserine" evidence="17">
    <location>
        <position position="814"/>
    </location>
</feature>
<feature type="modified residue" description="Phosphothreonine" evidence="16">
    <location>
        <position position="816"/>
    </location>
</feature>
<feature type="modified residue" description="Phosphoserine" evidence="17">
    <location>
        <position position="844"/>
    </location>
</feature>
<feature type="modified residue" description="Phosphoserine" evidence="17">
    <location>
        <position position="847"/>
    </location>
</feature>
<feature type="mutagenesis site" description="Impairs membrane recruitiment; when associated with A-11 and A-15." evidence="8">
    <original>L</original>
    <variation>A</variation>
    <location>
        <position position="8"/>
    </location>
</feature>
<feature type="mutagenesis site" description="Impairs membrane recruitiment; when associated with A-8 and A-15." evidence="8">
    <original>V</original>
    <variation>A</variation>
    <location>
        <position position="11"/>
    </location>
</feature>
<feature type="mutagenesis site" description="Impairs membrane recruitiment; when associated with A-8 and A-11." evidence="8">
    <original>W</original>
    <variation>A</variation>
    <location>
        <position position="15"/>
    </location>
</feature>
<feature type="mutagenesis site" description="Impairs phosphatidate phosphatase activity." evidence="7 10">
    <original>G</original>
    <variation>R</variation>
    <location>
        <position position="80"/>
    </location>
</feature>
<feature type="mutagenesis site" description="Impairs phosphatidate phosphatase activity." evidence="7 10">
    <original>D</original>
    <variation>E</variation>
    <location>
        <position position="398"/>
    </location>
</feature>
<feature type="mutagenesis site" description="Impairs phosphatidate phosphatase activity." evidence="7 10">
    <original>D</original>
    <variation>E</variation>
    <location>
        <position position="400"/>
    </location>
</feature>
<feature type="mutagenesis site" description="Abolished acetylation by ESA1, leading to decreased diacylglycerol synthesis; when associated with R-801." evidence="11">
    <original>K</original>
    <variation>R</variation>
    <location>
        <position position="496"/>
    </location>
</feature>
<feature type="mutagenesis site" description="Abolished acetylation by ESA1, leading to decreased diacylglycerol synthesis; when associated with R-496." evidence="11">
    <original>K</original>
    <variation>R</variation>
    <location>
        <position position="801"/>
    </location>
</feature>
<organism>
    <name type="scientific">Saccharomyces cerevisiae (strain ATCC 204508 / S288c)</name>
    <name type="common">Baker's yeast</name>
    <dbReference type="NCBI Taxonomy" id="559292"/>
    <lineage>
        <taxon>Eukaryota</taxon>
        <taxon>Fungi</taxon>
        <taxon>Dikarya</taxon>
        <taxon>Ascomycota</taxon>
        <taxon>Saccharomycotina</taxon>
        <taxon>Saccharomycetes</taxon>
        <taxon>Saccharomycetales</taxon>
        <taxon>Saccharomycetaceae</taxon>
        <taxon>Saccharomyces</taxon>
    </lineage>
</organism>
<comment type="function">
    <text evidence="3 4 5 6 7 8 9 10 11 12 13">Mg(2+)-dependent phosphatidate (PA) phosphatase which catalyzes the dephosphorylation of PA to yield diacylglycerol (PubMed:16467296, PubMed:16968695, PubMed:17910939, PubMed:17971454, PubMed:20876142, PubMed:21081492, PubMed:29765047, PubMed:39577771). Required for de novo lipid synthesis and formation of lipid droplets (PubMed:21422231). Controls transcription of phospholipid biosynthetic genes and nuclear structure by regulating the amount of membrane present at the nuclear envelope (PubMed:15889145). Involved in plasmid maintenance, in respiration and in cell proliferation (PubMed:8437575).</text>
</comment>
<comment type="catalytic activity">
    <reaction evidence="4 6 7 11 12">
        <text>a 1,2-diacyl-sn-glycero-3-phosphate + H2O = a 1,2-diacyl-sn-glycerol + phosphate</text>
        <dbReference type="Rhea" id="RHEA:27429"/>
        <dbReference type="ChEBI" id="CHEBI:15377"/>
        <dbReference type="ChEBI" id="CHEBI:17815"/>
        <dbReference type="ChEBI" id="CHEBI:43474"/>
        <dbReference type="ChEBI" id="CHEBI:58608"/>
        <dbReference type="EC" id="3.1.3.4"/>
    </reaction>
</comment>
<comment type="cofactor">
    <cofactor evidence="4">
        <name>Mg(2+)</name>
        <dbReference type="ChEBI" id="CHEBI:18420"/>
    </cofactor>
</comment>
<comment type="activity regulation">
    <text evidence="6 12">Phenylglyoxal and propranolol inhibit activity in dose-dependent manners with IC(50) values of 1.3 mM and 0.2 mM, respectively (PubMed:17910939, PubMed:39577771). Sertraline inhibits activity in a dose-dependent manner with an IC(50) value of 85 uM; the inhibitory effects of sertraline and propranolol are additive (PubMed:39577771).</text>
</comment>
<comment type="subcellular location">
    <subcellularLocation>
        <location>Cytoplasm</location>
    </subcellularLocation>
    <subcellularLocation>
        <location>Nucleus membrane</location>
        <topology>Peripheral membrane protein</topology>
    </subcellularLocation>
    <subcellularLocation>
        <location>Endoplasmic reticulum membrane</location>
        <topology>Peripheral membrane protein</topology>
    </subcellularLocation>
</comment>
<comment type="domain">
    <text evidence="8">The N-terminal amphipathic helix (residues 1 to 18) is involved in the membrane recruitment.</text>
</comment>
<comment type="domain">
    <text evidence="8">Contains one Asp-Xaa-Asp-Xaa-Thr (DXDXT) motif, a catalytic motif essential for phosphatidate phosphatase activity.</text>
</comment>
<comment type="PTM">
    <text evidence="11">Acetylation at Lys-496 and Lys-801 by ESA1 promotes synthesis of diacylglycerol.</text>
</comment>
<comment type="PTM">
    <text evidence="3 5 8 9">Phosphorylated by CDC28 at the onset of mitosis, and dephosphorylated by the NEM1-SPO7 complex. Phosphorylation regulates recruitment on promoters of lipid biosynthetic enzymes.</text>
</comment>
<comment type="disruption phenotype">
    <text evidence="12">Sensitive to sertraline.</text>
</comment>
<comment type="miscellaneous">
    <text evidence="2">Present with 3910 molecules/cell in log phase SD medium.</text>
</comment>
<comment type="similarity">
    <text evidence="14">Belongs to the lipin family.</text>
</comment>
<keyword id="KW-0007">Acetylation</keyword>
<keyword id="KW-0963">Cytoplasm</keyword>
<keyword id="KW-0256">Endoplasmic reticulum</keyword>
<keyword id="KW-0378">Hydrolase</keyword>
<keyword id="KW-0444">Lipid biosynthesis</keyword>
<keyword id="KW-0443">Lipid metabolism</keyword>
<keyword id="KW-0472">Membrane</keyword>
<keyword id="KW-0539">Nucleus</keyword>
<keyword id="KW-0597">Phosphoprotein</keyword>
<keyword id="KW-1185">Reference proteome</keyword>
<keyword id="KW-0804">Transcription</keyword>
<keyword id="KW-0805">Transcription regulation</keyword>
<reference key="1">
    <citation type="journal article" date="1993" name="Mol. Gen. Genet.">
        <title>A gene, SMP2, involved in plasmid maintenance and respiration in Saccharomyces cerevisiae encodes a highly charged protein.</title>
        <authorList>
            <person name="Irie K."/>
            <person name="Takase M."/>
            <person name="Araki H."/>
            <person name="Oshima Y."/>
        </authorList>
    </citation>
    <scope>NUCLEOTIDE SEQUENCE [GENOMIC DNA]</scope>
    <scope>FUNCTION</scope>
    <source>
        <strain>NBW5</strain>
    </source>
</reference>
<reference key="2">
    <citation type="journal article" date="1997" name="Nature">
        <title>The nucleotide sequence of Saccharomyces cerevisiae chromosome XIII.</title>
        <authorList>
            <person name="Bowman S."/>
            <person name="Churcher C.M."/>
            <person name="Badcock K."/>
            <person name="Brown D."/>
            <person name="Chillingworth T."/>
            <person name="Connor R."/>
            <person name="Dedman K."/>
            <person name="Devlin K."/>
            <person name="Gentles S."/>
            <person name="Hamlin N."/>
            <person name="Hunt S."/>
            <person name="Jagels K."/>
            <person name="Lye G."/>
            <person name="Moule S."/>
            <person name="Odell C."/>
            <person name="Pearson D."/>
            <person name="Rajandream M.A."/>
            <person name="Rice P."/>
            <person name="Skelton J."/>
            <person name="Walsh S.V."/>
            <person name="Whitehead S."/>
            <person name="Barrell B.G."/>
        </authorList>
    </citation>
    <scope>NUCLEOTIDE SEQUENCE [LARGE SCALE GENOMIC DNA]</scope>
    <source>
        <strain>ATCC 204508 / S288c</strain>
    </source>
</reference>
<reference key="3">
    <citation type="journal article" date="2014" name="G3 (Bethesda)">
        <title>The reference genome sequence of Saccharomyces cerevisiae: Then and now.</title>
        <authorList>
            <person name="Engel S.R."/>
            <person name="Dietrich F.S."/>
            <person name="Fisk D.G."/>
            <person name="Binkley G."/>
            <person name="Balakrishnan R."/>
            <person name="Costanzo M.C."/>
            <person name="Dwight S.S."/>
            <person name="Hitz B.C."/>
            <person name="Karra K."/>
            <person name="Nash R.S."/>
            <person name="Weng S."/>
            <person name="Wong E.D."/>
            <person name="Lloyd P."/>
            <person name="Skrzypek M.S."/>
            <person name="Miyasato S.R."/>
            <person name="Simison M."/>
            <person name="Cherry J.M."/>
        </authorList>
    </citation>
    <scope>GENOME REANNOTATION</scope>
    <source>
        <strain>ATCC 204508 / S288c</strain>
    </source>
</reference>
<reference key="4">
    <citation type="journal article" date="2003" name="Nature">
        <title>Global analysis of protein localization in budding yeast.</title>
        <authorList>
            <person name="Huh W.-K."/>
            <person name="Falvo J.V."/>
            <person name="Gerke L.C."/>
            <person name="Carroll A.S."/>
            <person name="Howson R.W."/>
            <person name="Weissman J.S."/>
            <person name="O'Shea E.K."/>
        </authorList>
    </citation>
    <scope>SUBCELLULAR LOCATION [LARGE SCALE ANALYSIS]</scope>
</reference>
<reference key="5">
    <citation type="journal article" date="2003" name="Nature">
        <title>Global analysis of protein expression in yeast.</title>
        <authorList>
            <person name="Ghaemmaghami S."/>
            <person name="Huh W.-K."/>
            <person name="Bower K."/>
            <person name="Howson R.W."/>
            <person name="Belle A."/>
            <person name="Dephoure N."/>
            <person name="O'Shea E.K."/>
            <person name="Weissman J.S."/>
        </authorList>
    </citation>
    <scope>LEVEL OF PROTEIN EXPRESSION [LARGE SCALE ANALYSIS]</scope>
</reference>
<reference key="6">
    <citation type="journal article" date="2005" name="EMBO J.">
        <title>The yeast lipin Smp2 couples phospholipid biosynthesis to nuclear membrane growth.</title>
        <authorList>
            <person name="Santos-Rosa H."/>
            <person name="Leung J."/>
            <person name="Grimsey N."/>
            <person name="Peak-Chew S."/>
            <person name="Siniossoglou S."/>
        </authorList>
    </citation>
    <scope>FUNCTION</scope>
    <scope>PHOSPHORYLATION</scope>
</reference>
<reference key="7">
    <citation type="journal article" date="2006" name="J. Biol. Chem.">
        <title>Control of phospholipid synthesis by phosphorylation of the yeast lipin Pah1p/Smp2p Mg2+-dependent phosphatidate phosphatase.</title>
        <authorList>
            <person name="O'Hara L."/>
            <person name="Han G.S."/>
            <person name="Peak-Chew S."/>
            <person name="Grimsey N."/>
            <person name="Carman G.M."/>
            <person name="Siniossoglou S."/>
        </authorList>
    </citation>
    <scope>FUNCTION</scope>
    <scope>PHOSPHORYLATION AT SER-110; SER-114; SER-168; SER-602; THR-723; SER-744 AND SER-748</scope>
</reference>
<reference key="8">
    <citation type="journal article" date="2006" name="J. Biol. Chem.">
        <title>The Saccharomyces cerevisiae Lipin homolog is a Mg2+-dependent phosphatidate phosphatase enzyme.</title>
        <authorList>
            <person name="Han G.S."/>
            <person name="Wu W.I."/>
            <person name="Carman G.M."/>
        </authorList>
    </citation>
    <scope>FUNCTION</scope>
    <scope>CATALYTIC ACTIVITY</scope>
    <scope>COFACTOR</scope>
    <scope>SUBCELLULAR LOCATION</scope>
</reference>
<reference key="9">
    <citation type="journal article" date="2007" name="J. Biol. Chem.">
        <title>The cellular functions of the yeast lipin homolog PAH1p are dependent on its phosphatidate phosphatase activity.</title>
        <authorList>
            <person name="Han G.S."/>
            <person name="Siniossoglou S."/>
            <person name="Carman G.M."/>
        </authorList>
    </citation>
    <scope>FUNCTION</scope>
    <scope>CATALYTIC ACTIVITY</scope>
    <scope>MUTAGENESIS OF GLY-80; ASP-398 AND ASP-400</scope>
</reference>
<reference key="10">
    <citation type="journal article" date="2007" name="J. Proteome Res.">
        <title>Large-scale phosphorylation analysis of alpha-factor-arrested Saccharomyces cerevisiae.</title>
        <authorList>
            <person name="Li X."/>
            <person name="Gerber S.A."/>
            <person name="Rudner A.D."/>
            <person name="Beausoleil S.A."/>
            <person name="Haas W."/>
            <person name="Villen J."/>
            <person name="Elias J.E."/>
            <person name="Gygi S.P."/>
        </authorList>
    </citation>
    <scope>PHOSPHORYLATION [LARGE SCALE ANALYSIS] AT SER-602; SER-744 AND SER-748</scope>
    <scope>IDENTIFICATION BY MASS SPECTROMETRY [LARGE SCALE ANALYSIS]</scope>
    <source>
        <strain>ADR376</strain>
    </source>
</reference>
<reference key="11">
    <citation type="journal article" date="2007" name="Proc. Natl. Acad. Sci. U.S.A.">
        <title>Analysis of phosphorylation sites on proteins from Saccharomyces cerevisiae by electron transfer dissociation (ETD) mass spectrometry.</title>
        <authorList>
            <person name="Chi A."/>
            <person name="Huttenhower C."/>
            <person name="Geer L.Y."/>
            <person name="Coon J.J."/>
            <person name="Syka J.E.P."/>
            <person name="Bai D.L."/>
            <person name="Shabanowitz J."/>
            <person name="Burke D.J."/>
            <person name="Troyanskaya O.G."/>
            <person name="Hunt D.F."/>
        </authorList>
    </citation>
    <scope>IDENTIFICATION BY MASS SPECTROMETRY [LARGE SCALE ANALYSIS]</scope>
</reference>
<reference key="12">
    <citation type="journal article" date="2008" name="Anal. Biochem.">
        <title>Colorimetric determination of pure Mg(2+)-dependent phosphatidate phosphatase activity.</title>
        <authorList>
            <person name="Havriluk T."/>
            <person name="Lozy F."/>
            <person name="Siniossoglou S."/>
            <person name="Carman G.M."/>
        </authorList>
    </citation>
    <scope>FUNCTION</scope>
    <scope>CATALYTIC ACTIVITY</scope>
    <scope>ACTIVITY REGULATION</scope>
</reference>
<reference key="13">
    <citation type="journal article" date="2008" name="Mol. Cell. Proteomics">
        <title>A multidimensional chromatography technology for in-depth phosphoproteome analysis.</title>
        <authorList>
            <person name="Albuquerque C.P."/>
            <person name="Smolka M.B."/>
            <person name="Payne S.H."/>
            <person name="Bafna V."/>
            <person name="Eng J."/>
            <person name="Zhou H."/>
        </authorList>
    </citation>
    <scope>PHOSPHORYLATION [LARGE SCALE ANALYSIS] AT SER-602; SER-744; SER-748 AND THR-816</scope>
    <scope>IDENTIFICATION BY MASS SPECTROMETRY [LARGE SCALE ANALYSIS]</scope>
</reference>
<reference key="14">
    <citation type="journal article" date="2009" name="Science">
        <title>Global analysis of Cdk1 substrate phosphorylation sites provides insights into evolution.</title>
        <authorList>
            <person name="Holt L.J."/>
            <person name="Tuch B.B."/>
            <person name="Villen J."/>
            <person name="Johnson A.D."/>
            <person name="Gygi S.P."/>
            <person name="Morgan D.O."/>
        </authorList>
    </citation>
    <scope>PHOSPHORYLATION [LARGE SCALE ANALYSIS] AT SER-511; SER-602; SER-744; SER-748; SER-773; SER-774; SER-810; SER-814; SER-844 AND SER-847</scope>
    <scope>IDENTIFICATION BY MASS SPECTROMETRY [LARGE SCALE ANALYSIS]</scope>
</reference>
<reference key="15">
    <citation type="journal article" date="2010" name="Proc. Natl. Acad. Sci. U.S.A.">
        <title>A phosphorylation-regulated amphipathic helix controls the membrane translocation and function of the yeast phosphatidate phosphatase.</title>
        <authorList>
            <person name="Karanasios E."/>
            <person name="Han G.S."/>
            <person name="Xu Z."/>
            <person name="Carman G.M."/>
            <person name="Siniossoglou S."/>
        </authorList>
    </citation>
    <scope>FUNCTION</scope>
    <scope>SUBCELLULAR LOCATION</scope>
    <scope>PHOSPHORYLATION</scope>
    <scope>DOMAIN</scope>
    <scope>MUTAGENESIS OF LEU-8; VAL-11 AND TRP-15</scope>
</reference>
<reference key="16">
    <citation type="journal article" date="2011" name="J. Biol. Chem.">
        <title>Phosphorylation of phosphatidate phosphatase regulates its membrane association and physiological functions in Saccharomyces cerevisiae: identification of SER(602), THR(723), and SER(744) as the sites phosphorylated by CDC28 (CDK1)-encoded cyclin-dependent kinase.</title>
        <authorList>
            <person name="Choi H.S."/>
            <person name="Su W.M."/>
            <person name="Morgan J.M."/>
            <person name="Han G.S."/>
            <person name="Xu Z."/>
            <person name="Karanasios E."/>
            <person name="Siniossoglou S."/>
            <person name="Carman G.M."/>
        </authorList>
    </citation>
    <scope>FUNCTION</scope>
    <scope>PHOSPHORYLATION AT SER-602; THR-723 AND SER-744</scope>
</reference>
<reference key="17">
    <citation type="journal article" date="2011" name="J. Cell Biol.">
        <title>The yeast lipin orthologue Pah1p is important for biogenesis of lipid droplets.</title>
        <authorList>
            <person name="Adeyo O."/>
            <person name="Horn P.J."/>
            <person name="Lee S."/>
            <person name="Binns D.D."/>
            <person name="Chandrahas A."/>
            <person name="Chapman K.D."/>
            <person name="Goodman J.M."/>
        </authorList>
    </citation>
    <scope>FUNCTION</scope>
    <scope>MUTAGENESIS OF GLY-80; ASP-398 AND ASP-400</scope>
</reference>
<reference key="18">
    <citation type="journal article" date="2018" name="Nat. Commun.">
        <title>Tip60-mediated lipin 1 acetylation and ER translocation determine triacylglycerol synthesis rate.</title>
        <authorList>
            <person name="Li T.Y."/>
            <person name="Song L."/>
            <person name="Sun Y."/>
            <person name="Li J."/>
            <person name="Yi C."/>
            <person name="Lam S.M."/>
            <person name="Xu D."/>
            <person name="Zhou L."/>
            <person name="Li X."/>
            <person name="Yang Y."/>
            <person name="Zhang C.S."/>
            <person name="Xie C."/>
            <person name="Huang X."/>
            <person name="Shui G."/>
            <person name="Lin S.Y."/>
            <person name="Reue K."/>
            <person name="Lin S.C."/>
        </authorList>
    </citation>
    <scope>FUNCTION</scope>
    <scope>CATALYTIC ACTIVITY</scope>
    <scope>ACETYLATION AT LYS-496 AND LYS-801</scope>
    <scope>MUTAGENESIS OF LYS-496 AND LYS-801</scope>
</reference>
<reference key="19">
    <citation type="journal article" date="2024" name="J. Lipid Res.">
        <title>The antidepressant drug sertraline is a novel inhibitor of yeast Pah1 and human lipin 1 phosphatidic acid phosphatases.</title>
        <authorList>
            <person name="Stukey G.J."/>
            <person name="Breuer M.R."/>
            <person name="Burchat N."/>
            <person name="Jog R."/>
            <person name="Schultz K."/>
            <person name="Han G.S."/>
            <person name="Sachs M.S."/>
            <person name="Sampath H."/>
            <person name="Marmorstein R."/>
            <person name="Carman G.M."/>
        </authorList>
    </citation>
    <scope>FUNCTION</scope>
    <scope>CATALYTIC ACTIVITY</scope>
    <scope>ACTIVITY REGULATION</scope>
    <scope>DISRUPTION PHENOTYPE</scope>
</reference>
<evidence type="ECO:0000256" key="1">
    <source>
        <dbReference type="SAM" id="MobiDB-lite"/>
    </source>
</evidence>
<evidence type="ECO:0000269" key="2">
    <source>
    </source>
</evidence>
<evidence type="ECO:0000269" key="3">
    <source>
    </source>
</evidence>
<evidence type="ECO:0000269" key="4">
    <source>
    </source>
</evidence>
<evidence type="ECO:0000269" key="5">
    <source>
    </source>
</evidence>
<evidence type="ECO:0000269" key="6">
    <source>
    </source>
</evidence>
<evidence type="ECO:0000269" key="7">
    <source>
    </source>
</evidence>
<evidence type="ECO:0000269" key="8">
    <source>
    </source>
</evidence>
<evidence type="ECO:0000269" key="9">
    <source>
    </source>
</evidence>
<evidence type="ECO:0000269" key="10">
    <source>
    </source>
</evidence>
<evidence type="ECO:0000269" key="11">
    <source>
    </source>
</evidence>
<evidence type="ECO:0000269" key="12">
    <source>
    </source>
</evidence>
<evidence type="ECO:0000269" key="13">
    <source>
    </source>
</evidence>
<evidence type="ECO:0000305" key="14"/>
<evidence type="ECO:0007744" key="15">
    <source>
    </source>
</evidence>
<evidence type="ECO:0007744" key="16">
    <source>
    </source>
</evidence>
<evidence type="ECO:0007744" key="17">
    <source>
    </source>
</evidence>
<protein>
    <recommendedName>
        <fullName>Phosphatidic acid phosphohydrolase 1</fullName>
        <shortName>PAP1</shortName>
        <ecNumber evidence="4 6 7 11 12">3.1.3.4</ecNumber>
    </recommendedName>
    <alternativeName>
        <fullName>Protein SMP2</fullName>
    </alternativeName>
</protein>